<sequence length="459" mass="51720">MDRFKMIKEVGDGTFGSVWRAINKQNGEVVAVKKMKRKYYSFEECMSLREVKSLRRMNHPNIVKLKEVIRENDILYFIMEYMECNLYQLMKDRVKPFSEAEVRNWCFQIFQALAYMHQRGYFHRDLKPENLLVSKDVIKLADFGLAREVTSVPPYTEYVSTRWYRAPEVLLQSSIYDSAVDMWAMGAIMAELLTLHPLFPGTSEADEILKICNVIGSPDEQSWPQGLSLAETMKFQFPQVSGNQLAEVMTSVSSEAVDLISSLCSWDPCKRPKAAEVLQHTFFQGCTFVPPTVRSKAGVLPKTPPCVGVKGVSEHGMPRRYSTGTLSTTKPHSNASLKSSGLSKTGVQRKLQMDRQAPQKIKKPTESNNKLTTNRVPARNSPGHPVLRHSRSLPETGRATMHKVSTLTERLTHMSVTSRTRTTPKPAAPLLKAGLGKSDLLGKTDEIPPAKRLTRKLVS</sequence>
<organism>
    <name type="scientific">Oryza sativa subsp. japonica</name>
    <name type="common">Rice</name>
    <dbReference type="NCBI Taxonomy" id="39947"/>
    <lineage>
        <taxon>Eukaryota</taxon>
        <taxon>Viridiplantae</taxon>
        <taxon>Streptophyta</taxon>
        <taxon>Embryophyta</taxon>
        <taxon>Tracheophyta</taxon>
        <taxon>Spermatophyta</taxon>
        <taxon>Magnoliopsida</taxon>
        <taxon>Liliopsida</taxon>
        <taxon>Poales</taxon>
        <taxon>Poaceae</taxon>
        <taxon>BOP clade</taxon>
        <taxon>Oryzoideae</taxon>
        <taxon>Oryzeae</taxon>
        <taxon>Oryzinae</taxon>
        <taxon>Oryza</taxon>
        <taxon>Oryza sativa</taxon>
    </lineage>
</organism>
<protein>
    <recommendedName>
        <fullName>Cyclin-dependent kinase F-4</fullName>
        <shortName>CDKF;4</shortName>
        <ecNumber>2.7.11.22</ecNumber>
        <ecNumber>2.7.11.23</ecNumber>
    </recommendedName>
    <alternativeName>
        <fullName>Serine/threonine-protein kinase MHK-like protein 2</fullName>
    </alternativeName>
</protein>
<feature type="chain" id="PRO_0000296109" description="Cyclin-dependent kinase F-4">
    <location>
        <begin position="1"/>
        <end position="459"/>
    </location>
</feature>
<feature type="domain" description="Protein kinase" evidence="2">
    <location>
        <begin position="4"/>
        <end position="283"/>
    </location>
</feature>
<feature type="region of interest" description="Disordered" evidence="4">
    <location>
        <begin position="310"/>
        <end position="397"/>
    </location>
</feature>
<feature type="compositionally biased region" description="Polar residues" evidence="4">
    <location>
        <begin position="322"/>
        <end position="346"/>
    </location>
</feature>
<feature type="compositionally biased region" description="Polar residues" evidence="4">
    <location>
        <begin position="366"/>
        <end position="375"/>
    </location>
</feature>
<feature type="active site" description="Proton acceptor" evidence="2 3">
    <location>
        <position position="125"/>
    </location>
</feature>
<feature type="binding site" evidence="2">
    <location>
        <begin position="10"/>
        <end position="18"/>
    </location>
    <ligand>
        <name>ATP</name>
        <dbReference type="ChEBI" id="CHEBI:30616"/>
    </ligand>
</feature>
<feature type="binding site" evidence="2">
    <location>
        <position position="33"/>
    </location>
    <ligand>
        <name>ATP</name>
        <dbReference type="ChEBI" id="CHEBI:30616"/>
    </ligand>
</feature>
<feature type="modified residue" description="Phosphoserine" evidence="1">
    <location>
        <position position="151"/>
    </location>
</feature>
<feature type="modified residue" description="Phosphothreonine" evidence="1">
    <location>
        <position position="156"/>
    </location>
</feature>
<dbReference type="EC" id="2.7.11.22"/>
<dbReference type="EC" id="2.7.11.23"/>
<dbReference type="EMBL" id="AP003994">
    <property type="protein sequence ID" value="BAD07520.1"/>
    <property type="molecule type" value="Genomic_DNA"/>
</dbReference>
<dbReference type="EMBL" id="AP004778">
    <property type="protein sequence ID" value="BAD07891.1"/>
    <property type="molecule type" value="Genomic_DNA"/>
</dbReference>
<dbReference type="EMBL" id="AP008208">
    <property type="protein sequence ID" value="BAF09755.1"/>
    <property type="molecule type" value="Genomic_DNA"/>
</dbReference>
<dbReference type="EMBL" id="AP014958">
    <property type="protein sequence ID" value="BAS80463.1"/>
    <property type="molecule type" value="Genomic_DNA"/>
</dbReference>
<dbReference type="EMBL" id="CM000139">
    <property type="protein sequence ID" value="EEE57632.1"/>
    <property type="molecule type" value="Genomic_DNA"/>
</dbReference>
<dbReference type="EMBL" id="AK100056">
    <property type="protein sequence ID" value="BAG94420.1"/>
    <property type="molecule type" value="mRNA"/>
</dbReference>
<dbReference type="RefSeq" id="XP_015626442.1">
    <property type="nucleotide sequence ID" value="XM_015770956.1"/>
</dbReference>
<dbReference type="RefSeq" id="XP_015626443.1">
    <property type="nucleotide sequence ID" value="XM_015770957.1"/>
</dbReference>
<dbReference type="RefSeq" id="XP_015626444.1">
    <property type="nucleotide sequence ID" value="XM_015770958.1"/>
</dbReference>
<dbReference type="SMR" id="Q6Z8C8"/>
<dbReference type="FunCoup" id="Q6Z8C8">
    <property type="interactions" value="501"/>
</dbReference>
<dbReference type="STRING" id="39947.Q6Z8C8"/>
<dbReference type="PaxDb" id="39947-Q6Z8C8"/>
<dbReference type="EnsemblPlants" id="Os02t0700600-01">
    <property type="protein sequence ID" value="Os02t0700600-01"/>
    <property type="gene ID" value="Os02g0700600"/>
</dbReference>
<dbReference type="Gramene" id="Os02t0700600-01">
    <property type="protein sequence ID" value="Os02t0700600-01"/>
    <property type="gene ID" value="Os02g0700600"/>
</dbReference>
<dbReference type="KEGG" id="dosa:Os02g0700600"/>
<dbReference type="eggNOG" id="KOG0661">
    <property type="taxonomic scope" value="Eukaryota"/>
</dbReference>
<dbReference type="HOGENOM" id="CLU_000288_181_25_1"/>
<dbReference type="InParanoid" id="Q6Z8C8"/>
<dbReference type="OMA" id="LLHDTHY"/>
<dbReference type="OrthoDB" id="2158884at2759"/>
<dbReference type="Proteomes" id="UP000000763">
    <property type="component" value="Chromosome 2"/>
</dbReference>
<dbReference type="Proteomes" id="UP000007752">
    <property type="component" value="Chromosome 2"/>
</dbReference>
<dbReference type="Proteomes" id="UP000059680">
    <property type="component" value="Chromosome 2"/>
</dbReference>
<dbReference type="ExpressionAtlas" id="Q6Z8C8">
    <property type="expression patterns" value="baseline and differential"/>
</dbReference>
<dbReference type="GO" id="GO:0005737">
    <property type="term" value="C:cytoplasm"/>
    <property type="evidence" value="ECO:0000318"/>
    <property type="project" value="GO_Central"/>
</dbReference>
<dbReference type="GO" id="GO:0005634">
    <property type="term" value="C:nucleus"/>
    <property type="evidence" value="ECO:0000318"/>
    <property type="project" value="GO_Central"/>
</dbReference>
<dbReference type="GO" id="GO:0005524">
    <property type="term" value="F:ATP binding"/>
    <property type="evidence" value="ECO:0007669"/>
    <property type="project" value="UniProtKB-KW"/>
</dbReference>
<dbReference type="GO" id="GO:0004693">
    <property type="term" value="F:cyclin-dependent protein serine/threonine kinase activity"/>
    <property type="evidence" value="ECO:0007669"/>
    <property type="project" value="UniProtKB-EC"/>
</dbReference>
<dbReference type="GO" id="GO:0106310">
    <property type="term" value="F:protein serine kinase activity"/>
    <property type="evidence" value="ECO:0007669"/>
    <property type="project" value="RHEA"/>
</dbReference>
<dbReference type="GO" id="GO:0004674">
    <property type="term" value="F:protein serine/threonine kinase activity"/>
    <property type="evidence" value="ECO:0000318"/>
    <property type="project" value="GO_Central"/>
</dbReference>
<dbReference type="GO" id="GO:0008353">
    <property type="term" value="F:RNA polymerase II CTD heptapeptide repeat kinase activity"/>
    <property type="evidence" value="ECO:0007669"/>
    <property type="project" value="UniProtKB-EC"/>
</dbReference>
<dbReference type="GO" id="GO:0035556">
    <property type="term" value="P:intracellular signal transduction"/>
    <property type="evidence" value="ECO:0000318"/>
    <property type="project" value="GO_Central"/>
</dbReference>
<dbReference type="CDD" id="cd07830">
    <property type="entry name" value="STKc_MAK_like"/>
    <property type="match status" value="1"/>
</dbReference>
<dbReference type="FunFam" id="3.30.200.20:FF:000262">
    <property type="entry name" value="cyclin-dependent kinase F-4-like"/>
    <property type="match status" value="1"/>
</dbReference>
<dbReference type="FunFam" id="1.10.510.10:FF:000104">
    <property type="entry name" value="serine/threonine-protein kinase MAK isoform X1"/>
    <property type="match status" value="1"/>
</dbReference>
<dbReference type="Gene3D" id="3.30.200.20">
    <property type="entry name" value="Phosphorylase Kinase, domain 1"/>
    <property type="match status" value="1"/>
</dbReference>
<dbReference type="Gene3D" id="1.10.510.10">
    <property type="entry name" value="Transferase(Phosphotransferase) domain 1"/>
    <property type="match status" value="1"/>
</dbReference>
<dbReference type="InterPro" id="IPR011009">
    <property type="entry name" value="Kinase-like_dom_sf"/>
</dbReference>
<dbReference type="InterPro" id="IPR050117">
    <property type="entry name" value="MAP_kinase"/>
</dbReference>
<dbReference type="InterPro" id="IPR000719">
    <property type="entry name" value="Prot_kinase_dom"/>
</dbReference>
<dbReference type="InterPro" id="IPR017441">
    <property type="entry name" value="Protein_kinase_ATP_BS"/>
</dbReference>
<dbReference type="InterPro" id="IPR008271">
    <property type="entry name" value="Ser/Thr_kinase_AS"/>
</dbReference>
<dbReference type="PANTHER" id="PTHR24055">
    <property type="entry name" value="MITOGEN-ACTIVATED PROTEIN KINASE"/>
    <property type="match status" value="1"/>
</dbReference>
<dbReference type="Pfam" id="PF00069">
    <property type="entry name" value="Pkinase"/>
    <property type="match status" value="1"/>
</dbReference>
<dbReference type="SMART" id="SM00220">
    <property type="entry name" value="S_TKc"/>
    <property type="match status" value="1"/>
</dbReference>
<dbReference type="SUPFAM" id="SSF56112">
    <property type="entry name" value="Protein kinase-like (PK-like)"/>
    <property type="match status" value="1"/>
</dbReference>
<dbReference type="PROSITE" id="PS00107">
    <property type="entry name" value="PROTEIN_KINASE_ATP"/>
    <property type="match status" value="1"/>
</dbReference>
<dbReference type="PROSITE" id="PS50011">
    <property type="entry name" value="PROTEIN_KINASE_DOM"/>
    <property type="match status" value="1"/>
</dbReference>
<dbReference type="PROSITE" id="PS00108">
    <property type="entry name" value="PROTEIN_KINASE_ST"/>
    <property type="match status" value="1"/>
</dbReference>
<accession>Q6Z8C8</accession>
<accession>B7EPX3</accession>
<comment type="catalytic activity">
    <reaction>
        <text>L-seryl-[protein] + ATP = O-phospho-L-seryl-[protein] + ADP + H(+)</text>
        <dbReference type="Rhea" id="RHEA:17989"/>
        <dbReference type="Rhea" id="RHEA-COMP:9863"/>
        <dbReference type="Rhea" id="RHEA-COMP:11604"/>
        <dbReference type="ChEBI" id="CHEBI:15378"/>
        <dbReference type="ChEBI" id="CHEBI:29999"/>
        <dbReference type="ChEBI" id="CHEBI:30616"/>
        <dbReference type="ChEBI" id="CHEBI:83421"/>
        <dbReference type="ChEBI" id="CHEBI:456216"/>
        <dbReference type="EC" id="2.7.11.22"/>
    </reaction>
</comment>
<comment type="catalytic activity">
    <reaction>
        <text>L-threonyl-[protein] + ATP = O-phospho-L-threonyl-[protein] + ADP + H(+)</text>
        <dbReference type="Rhea" id="RHEA:46608"/>
        <dbReference type="Rhea" id="RHEA-COMP:11060"/>
        <dbReference type="Rhea" id="RHEA-COMP:11605"/>
        <dbReference type="ChEBI" id="CHEBI:15378"/>
        <dbReference type="ChEBI" id="CHEBI:30013"/>
        <dbReference type="ChEBI" id="CHEBI:30616"/>
        <dbReference type="ChEBI" id="CHEBI:61977"/>
        <dbReference type="ChEBI" id="CHEBI:456216"/>
        <dbReference type="EC" id="2.7.11.22"/>
    </reaction>
</comment>
<comment type="catalytic activity">
    <reaction>
        <text>[DNA-directed RNA polymerase] + ATP = phospho-[DNA-directed RNA polymerase] + ADP + H(+)</text>
        <dbReference type="Rhea" id="RHEA:10216"/>
        <dbReference type="Rhea" id="RHEA-COMP:11321"/>
        <dbReference type="Rhea" id="RHEA-COMP:11322"/>
        <dbReference type="ChEBI" id="CHEBI:15378"/>
        <dbReference type="ChEBI" id="CHEBI:30616"/>
        <dbReference type="ChEBI" id="CHEBI:43176"/>
        <dbReference type="ChEBI" id="CHEBI:68546"/>
        <dbReference type="ChEBI" id="CHEBI:456216"/>
        <dbReference type="EC" id="2.7.11.23"/>
    </reaction>
</comment>
<comment type="similarity">
    <text evidence="5">Belongs to the protein kinase superfamily. CMGC Ser/Thr protein kinase family. CDC2/CDKX subfamily.</text>
</comment>
<keyword id="KW-0067">ATP-binding</keyword>
<keyword id="KW-0418">Kinase</keyword>
<keyword id="KW-0547">Nucleotide-binding</keyword>
<keyword id="KW-0597">Phosphoprotein</keyword>
<keyword id="KW-1185">Reference proteome</keyword>
<keyword id="KW-0723">Serine/threonine-protein kinase</keyword>
<keyword id="KW-0808">Transferase</keyword>
<name>CDKF4_ORYSJ</name>
<reference key="1">
    <citation type="journal article" date="2005" name="Nature">
        <title>The map-based sequence of the rice genome.</title>
        <authorList>
            <consortium name="International rice genome sequencing project (IRGSP)"/>
        </authorList>
    </citation>
    <scope>NUCLEOTIDE SEQUENCE [LARGE SCALE GENOMIC DNA]</scope>
    <source>
        <strain>cv. Nipponbare</strain>
    </source>
</reference>
<reference key="2">
    <citation type="journal article" date="2008" name="Nucleic Acids Res.">
        <title>The rice annotation project database (RAP-DB): 2008 update.</title>
        <authorList>
            <consortium name="The rice annotation project (RAP)"/>
        </authorList>
    </citation>
    <scope>GENOME REANNOTATION</scope>
    <source>
        <strain>cv. Nipponbare</strain>
    </source>
</reference>
<reference key="3">
    <citation type="journal article" date="2013" name="Rice">
        <title>Improvement of the Oryza sativa Nipponbare reference genome using next generation sequence and optical map data.</title>
        <authorList>
            <person name="Kawahara Y."/>
            <person name="de la Bastide M."/>
            <person name="Hamilton J.P."/>
            <person name="Kanamori H."/>
            <person name="McCombie W.R."/>
            <person name="Ouyang S."/>
            <person name="Schwartz D.C."/>
            <person name="Tanaka T."/>
            <person name="Wu J."/>
            <person name="Zhou S."/>
            <person name="Childs K.L."/>
            <person name="Davidson R.M."/>
            <person name="Lin H."/>
            <person name="Quesada-Ocampo L."/>
            <person name="Vaillancourt B."/>
            <person name="Sakai H."/>
            <person name="Lee S.S."/>
            <person name="Kim J."/>
            <person name="Numa H."/>
            <person name="Itoh T."/>
            <person name="Buell C.R."/>
            <person name="Matsumoto T."/>
        </authorList>
    </citation>
    <scope>GENOME REANNOTATION</scope>
    <source>
        <strain>cv. Nipponbare</strain>
    </source>
</reference>
<reference key="4">
    <citation type="journal article" date="2005" name="PLoS Biol.">
        <title>The genomes of Oryza sativa: a history of duplications.</title>
        <authorList>
            <person name="Yu J."/>
            <person name="Wang J."/>
            <person name="Lin W."/>
            <person name="Li S."/>
            <person name="Li H."/>
            <person name="Zhou J."/>
            <person name="Ni P."/>
            <person name="Dong W."/>
            <person name="Hu S."/>
            <person name="Zeng C."/>
            <person name="Zhang J."/>
            <person name="Zhang Y."/>
            <person name="Li R."/>
            <person name="Xu Z."/>
            <person name="Li S."/>
            <person name="Li X."/>
            <person name="Zheng H."/>
            <person name="Cong L."/>
            <person name="Lin L."/>
            <person name="Yin J."/>
            <person name="Geng J."/>
            <person name="Li G."/>
            <person name="Shi J."/>
            <person name="Liu J."/>
            <person name="Lv H."/>
            <person name="Li J."/>
            <person name="Wang J."/>
            <person name="Deng Y."/>
            <person name="Ran L."/>
            <person name="Shi X."/>
            <person name="Wang X."/>
            <person name="Wu Q."/>
            <person name="Li C."/>
            <person name="Ren X."/>
            <person name="Wang J."/>
            <person name="Wang X."/>
            <person name="Li D."/>
            <person name="Liu D."/>
            <person name="Zhang X."/>
            <person name="Ji Z."/>
            <person name="Zhao W."/>
            <person name="Sun Y."/>
            <person name="Zhang Z."/>
            <person name="Bao J."/>
            <person name="Han Y."/>
            <person name="Dong L."/>
            <person name="Ji J."/>
            <person name="Chen P."/>
            <person name="Wu S."/>
            <person name="Liu J."/>
            <person name="Xiao Y."/>
            <person name="Bu D."/>
            <person name="Tan J."/>
            <person name="Yang L."/>
            <person name="Ye C."/>
            <person name="Zhang J."/>
            <person name="Xu J."/>
            <person name="Zhou Y."/>
            <person name="Yu Y."/>
            <person name="Zhang B."/>
            <person name="Zhuang S."/>
            <person name="Wei H."/>
            <person name="Liu B."/>
            <person name="Lei M."/>
            <person name="Yu H."/>
            <person name="Li Y."/>
            <person name="Xu H."/>
            <person name="Wei S."/>
            <person name="He X."/>
            <person name="Fang L."/>
            <person name="Zhang Z."/>
            <person name="Zhang Y."/>
            <person name="Huang X."/>
            <person name="Su Z."/>
            <person name="Tong W."/>
            <person name="Li J."/>
            <person name="Tong Z."/>
            <person name="Li S."/>
            <person name="Ye J."/>
            <person name="Wang L."/>
            <person name="Fang L."/>
            <person name="Lei T."/>
            <person name="Chen C.-S."/>
            <person name="Chen H.-C."/>
            <person name="Xu Z."/>
            <person name="Li H."/>
            <person name="Huang H."/>
            <person name="Zhang F."/>
            <person name="Xu H."/>
            <person name="Li N."/>
            <person name="Zhao C."/>
            <person name="Li S."/>
            <person name="Dong L."/>
            <person name="Huang Y."/>
            <person name="Li L."/>
            <person name="Xi Y."/>
            <person name="Qi Q."/>
            <person name="Li W."/>
            <person name="Zhang B."/>
            <person name="Hu W."/>
            <person name="Zhang Y."/>
            <person name="Tian X."/>
            <person name="Jiao Y."/>
            <person name="Liang X."/>
            <person name="Jin J."/>
            <person name="Gao L."/>
            <person name="Zheng W."/>
            <person name="Hao B."/>
            <person name="Liu S.-M."/>
            <person name="Wang W."/>
            <person name="Yuan L."/>
            <person name="Cao M."/>
            <person name="McDermott J."/>
            <person name="Samudrala R."/>
            <person name="Wang J."/>
            <person name="Wong G.K.-S."/>
            <person name="Yang H."/>
        </authorList>
    </citation>
    <scope>NUCLEOTIDE SEQUENCE [LARGE SCALE GENOMIC DNA]</scope>
    <source>
        <strain>cv. Nipponbare</strain>
    </source>
</reference>
<reference key="5">
    <citation type="journal article" date="2003" name="Science">
        <title>Collection, mapping, and annotation of over 28,000 cDNA clones from japonica rice.</title>
        <authorList>
            <consortium name="The rice full-length cDNA consortium"/>
        </authorList>
    </citation>
    <scope>NUCLEOTIDE SEQUENCE [LARGE SCALE MRNA]</scope>
    <source>
        <strain>cv. Nipponbare</strain>
    </source>
</reference>
<reference key="6">
    <citation type="journal article" date="2007" name="Plant Mol. Biol.">
        <title>Genome-wide identification and expression analysis of rice cell cycle genes.</title>
        <authorList>
            <person name="Guo J."/>
            <person name="Song J."/>
            <person name="Wang F."/>
            <person name="Zhang X.S."/>
        </authorList>
    </citation>
    <scope>GENE FAMILY</scope>
</reference>
<evidence type="ECO:0000250" key="1"/>
<evidence type="ECO:0000255" key="2">
    <source>
        <dbReference type="PROSITE-ProRule" id="PRU00159"/>
    </source>
</evidence>
<evidence type="ECO:0000255" key="3">
    <source>
        <dbReference type="PROSITE-ProRule" id="PRU10027"/>
    </source>
</evidence>
<evidence type="ECO:0000256" key="4">
    <source>
        <dbReference type="SAM" id="MobiDB-lite"/>
    </source>
</evidence>
<evidence type="ECO:0000305" key="5"/>
<evidence type="ECO:0000312" key="6">
    <source>
        <dbReference type="EMBL" id="EEE57632.1"/>
    </source>
</evidence>
<gene>
    <name type="primary">CDKF-4</name>
    <name type="ordered locus">Os02g0700600</name>
    <name type="ordered locus">LOC_Os02g47220</name>
    <name type="ORF">OJ1111_E07.13-1</name>
    <name evidence="6" type="ORF">OsJ_08052</name>
    <name type="ORF">P0459B01.42-1</name>
</gene>
<proteinExistence type="evidence at transcript level"/>